<proteinExistence type="inferred from homology"/>
<protein>
    <recommendedName>
        <fullName evidence="1">Chaperone modulatory protein CbpM</fullName>
    </recommendedName>
</protein>
<accession>B7NLC6</accession>
<sequence length="101" mass="11512">MANVTVTFTITEFCLHTGISEEELNEIVGLGVVEPREIQETTWVFDDHAAIVVQRAVRLRHELALDWPGIAVALTLMDDIAHLKQENRLLRQRLSRFVAHP</sequence>
<reference key="1">
    <citation type="journal article" date="2009" name="PLoS Genet.">
        <title>Organised genome dynamics in the Escherichia coli species results in highly diverse adaptive paths.</title>
        <authorList>
            <person name="Touchon M."/>
            <person name="Hoede C."/>
            <person name="Tenaillon O."/>
            <person name="Barbe V."/>
            <person name="Baeriswyl S."/>
            <person name="Bidet P."/>
            <person name="Bingen E."/>
            <person name="Bonacorsi S."/>
            <person name="Bouchier C."/>
            <person name="Bouvet O."/>
            <person name="Calteau A."/>
            <person name="Chiapello H."/>
            <person name="Clermont O."/>
            <person name="Cruveiller S."/>
            <person name="Danchin A."/>
            <person name="Diard M."/>
            <person name="Dossat C."/>
            <person name="Karoui M.E."/>
            <person name="Frapy E."/>
            <person name="Garry L."/>
            <person name="Ghigo J.M."/>
            <person name="Gilles A.M."/>
            <person name="Johnson J."/>
            <person name="Le Bouguenec C."/>
            <person name="Lescat M."/>
            <person name="Mangenot S."/>
            <person name="Martinez-Jehanne V."/>
            <person name="Matic I."/>
            <person name="Nassif X."/>
            <person name="Oztas S."/>
            <person name="Petit M.A."/>
            <person name="Pichon C."/>
            <person name="Rouy Z."/>
            <person name="Ruf C.S."/>
            <person name="Schneider D."/>
            <person name="Tourret J."/>
            <person name="Vacherie B."/>
            <person name="Vallenet D."/>
            <person name="Medigue C."/>
            <person name="Rocha E.P.C."/>
            <person name="Denamur E."/>
        </authorList>
    </citation>
    <scope>NUCLEOTIDE SEQUENCE [LARGE SCALE GENOMIC DNA]</scope>
    <source>
        <strain>IAI39 / ExPEC</strain>
    </source>
</reference>
<dbReference type="EMBL" id="CU928164">
    <property type="protein sequence ID" value="CAR18282.1"/>
    <property type="molecule type" value="Genomic_DNA"/>
</dbReference>
<dbReference type="RefSeq" id="WP_000024560.1">
    <property type="nucleotide sequence ID" value="NC_011750.1"/>
</dbReference>
<dbReference type="RefSeq" id="YP_002408118.1">
    <property type="nucleotide sequence ID" value="NC_011750.1"/>
</dbReference>
<dbReference type="SMR" id="B7NLC6"/>
<dbReference type="STRING" id="585057.ECIAI39_2155"/>
<dbReference type="GeneID" id="93776412"/>
<dbReference type="KEGG" id="ect:ECIAI39_2155"/>
<dbReference type="PATRIC" id="fig|585057.6.peg.2244"/>
<dbReference type="HOGENOM" id="CLU_144710_3_1_6"/>
<dbReference type="Proteomes" id="UP000000749">
    <property type="component" value="Chromosome"/>
</dbReference>
<dbReference type="FunFam" id="1.10.1660.10:FF:000006">
    <property type="entry name" value="Chaperone modulatory protein CbpM"/>
    <property type="match status" value="1"/>
</dbReference>
<dbReference type="Gene3D" id="1.10.1660.10">
    <property type="match status" value="1"/>
</dbReference>
<dbReference type="HAMAP" id="MF_01155">
    <property type="entry name" value="CbpM"/>
    <property type="match status" value="1"/>
</dbReference>
<dbReference type="InterPro" id="IPR022835">
    <property type="entry name" value="CbpM"/>
</dbReference>
<dbReference type="NCBIfam" id="NF007617">
    <property type="entry name" value="PRK10265.1"/>
    <property type="match status" value="1"/>
</dbReference>
<dbReference type="Pfam" id="PF13591">
    <property type="entry name" value="MerR_2"/>
    <property type="match status" value="1"/>
</dbReference>
<feature type="chain" id="PRO_1000137768" description="Chaperone modulatory protein CbpM">
    <location>
        <begin position="1"/>
        <end position="101"/>
    </location>
</feature>
<name>CBPM_ECO7I</name>
<comment type="function">
    <text evidence="1">Interacts with CbpA and inhibits both the DnaJ-like co-chaperone activity and the DNA binding activity of CbpA. Together with CbpA, modulates the activity of the DnaK chaperone system. Does not inhibit the co-chaperone activity of DnaJ.</text>
</comment>
<comment type="similarity">
    <text evidence="1">Belongs to the CbpM family.</text>
</comment>
<gene>
    <name evidence="1" type="primary">cbpM</name>
    <name type="ordered locus">ECIAI39_2155</name>
</gene>
<organism>
    <name type="scientific">Escherichia coli O7:K1 (strain IAI39 / ExPEC)</name>
    <dbReference type="NCBI Taxonomy" id="585057"/>
    <lineage>
        <taxon>Bacteria</taxon>
        <taxon>Pseudomonadati</taxon>
        <taxon>Pseudomonadota</taxon>
        <taxon>Gammaproteobacteria</taxon>
        <taxon>Enterobacterales</taxon>
        <taxon>Enterobacteriaceae</taxon>
        <taxon>Escherichia</taxon>
    </lineage>
</organism>
<evidence type="ECO:0000255" key="1">
    <source>
        <dbReference type="HAMAP-Rule" id="MF_01155"/>
    </source>
</evidence>